<name>RPO3_PYRAE</name>
<comment type="function">
    <text evidence="1">DNA-dependent RNA polymerase (RNAP) catalyzes the transcription of DNA into RNA using the four ribonucleoside triphosphates as substrates.</text>
</comment>
<comment type="catalytic activity">
    <reaction evidence="1">
        <text>RNA(n) + a ribonucleoside 5'-triphosphate = RNA(n+1) + diphosphate</text>
        <dbReference type="Rhea" id="RHEA:21248"/>
        <dbReference type="Rhea" id="RHEA-COMP:14527"/>
        <dbReference type="Rhea" id="RHEA-COMP:17342"/>
        <dbReference type="ChEBI" id="CHEBI:33019"/>
        <dbReference type="ChEBI" id="CHEBI:61557"/>
        <dbReference type="ChEBI" id="CHEBI:140395"/>
        <dbReference type="EC" id="2.7.7.6"/>
    </reaction>
</comment>
<comment type="subunit">
    <text evidence="1">Part of the RNA polymerase complex.</text>
</comment>
<comment type="subcellular location">
    <subcellularLocation>
        <location evidence="1">Cytoplasm</location>
    </subcellularLocation>
</comment>
<comment type="similarity">
    <text evidence="1">Belongs to the archaeal Rpo3/eukaryotic RPB3 RNA polymerase subunit family.</text>
</comment>
<accession>Q8ZYQ3</accession>
<evidence type="ECO:0000255" key="1">
    <source>
        <dbReference type="HAMAP-Rule" id="MF_00320"/>
    </source>
</evidence>
<feature type="chain" id="PRO_0000132760" description="DNA-directed RNA polymerase subunit Rpo3">
    <location>
        <begin position="1"/>
        <end position="260"/>
    </location>
</feature>
<keyword id="KW-0963">Cytoplasm</keyword>
<keyword id="KW-0240">DNA-directed RNA polymerase</keyword>
<keyword id="KW-0548">Nucleotidyltransferase</keyword>
<keyword id="KW-1185">Reference proteome</keyword>
<keyword id="KW-0804">Transcription</keyword>
<keyword id="KW-0808">Transferase</keyword>
<proteinExistence type="inferred from homology"/>
<organism>
    <name type="scientific">Pyrobaculum aerophilum (strain ATCC 51768 / DSM 7523 / JCM 9630 / CIP 104966 / NBRC 100827 / IM2)</name>
    <dbReference type="NCBI Taxonomy" id="178306"/>
    <lineage>
        <taxon>Archaea</taxon>
        <taxon>Thermoproteota</taxon>
        <taxon>Thermoprotei</taxon>
        <taxon>Thermoproteales</taxon>
        <taxon>Thermoproteaceae</taxon>
        <taxon>Pyrobaculum</taxon>
    </lineage>
</organism>
<sequence>MARATVVERGEYFLKAVVEGVPPSLVNSLRRVIISELPVMAIDNVVVVNNTSVMYDEMLAHRLGLIPLTTPLQSLPPYEDCVSGLADPSECSTRLTLQVTAEGDTTIYSGDLASDRPDVVPVYKDIPIVKLVKGQSIVLEAYAKLGVAKDHAKWQAATASYYYYPKVVVKSENCREMCKEICRQLENPIECSFNKAWTCKDLCKEGLEVTWDKNKYVFWVESFGNYDVNTALREAFRILKRKFAVFAEELFRRASVETKV</sequence>
<gene>
    <name evidence="1" type="primary">rpo3</name>
    <name evidence="1" type="synonym">rpoD</name>
    <name type="ordered locus">PAE0671</name>
</gene>
<dbReference type="EC" id="2.7.7.6" evidence="1"/>
<dbReference type="EMBL" id="AE009441">
    <property type="protein sequence ID" value="AAL62940.1"/>
    <property type="molecule type" value="Genomic_DNA"/>
</dbReference>
<dbReference type="RefSeq" id="WP_011007412.1">
    <property type="nucleotide sequence ID" value="NC_003364.1"/>
</dbReference>
<dbReference type="SMR" id="Q8ZYQ3"/>
<dbReference type="FunCoup" id="Q8ZYQ3">
    <property type="interactions" value="152"/>
</dbReference>
<dbReference type="STRING" id="178306.PAE0671"/>
<dbReference type="EnsemblBacteria" id="AAL62940">
    <property type="protein sequence ID" value="AAL62940"/>
    <property type="gene ID" value="PAE0671"/>
</dbReference>
<dbReference type="GeneID" id="1465165"/>
<dbReference type="KEGG" id="pai:PAE0671"/>
<dbReference type="PATRIC" id="fig|178306.9.peg.485"/>
<dbReference type="eggNOG" id="arCOG04241">
    <property type="taxonomic scope" value="Archaea"/>
</dbReference>
<dbReference type="HOGENOM" id="CLU_038421_3_1_2"/>
<dbReference type="InParanoid" id="Q8ZYQ3"/>
<dbReference type="Proteomes" id="UP000002439">
    <property type="component" value="Chromosome"/>
</dbReference>
<dbReference type="GO" id="GO:0005737">
    <property type="term" value="C:cytoplasm"/>
    <property type="evidence" value="ECO:0007669"/>
    <property type="project" value="UniProtKB-SubCell"/>
</dbReference>
<dbReference type="GO" id="GO:0000428">
    <property type="term" value="C:DNA-directed RNA polymerase complex"/>
    <property type="evidence" value="ECO:0007669"/>
    <property type="project" value="UniProtKB-KW"/>
</dbReference>
<dbReference type="GO" id="GO:0003677">
    <property type="term" value="F:DNA binding"/>
    <property type="evidence" value="ECO:0007669"/>
    <property type="project" value="UniProtKB-UniRule"/>
</dbReference>
<dbReference type="GO" id="GO:0003899">
    <property type="term" value="F:DNA-directed RNA polymerase activity"/>
    <property type="evidence" value="ECO:0007669"/>
    <property type="project" value="UniProtKB-UniRule"/>
</dbReference>
<dbReference type="GO" id="GO:0051536">
    <property type="term" value="F:iron-sulfur cluster binding"/>
    <property type="evidence" value="ECO:0007669"/>
    <property type="project" value="UniProtKB-UniRule"/>
</dbReference>
<dbReference type="GO" id="GO:0046983">
    <property type="term" value="F:protein dimerization activity"/>
    <property type="evidence" value="ECO:0007669"/>
    <property type="project" value="InterPro"/>
</dbReference>
<dbReference type="GO" id="GO:0006351">
    <property type="term" value="P:DNA-templated transcription"/>
    <property type="evidence" value="ECO:0007669"/>
    <property type="project" value="UniProtKB-UniRule"/>
</dbReference>
<dbReference type="CDD" id="cd07030">
    <property type="entry name" value="RNAP_D"/>
    <property type="match status" value="1"/>
</dbReference>
<dbReference type="Gene3D" id="3.30.70.3110">
    <property type="match status" value="1"/>
</dbReference>
<dbReference type="Gene3D" id="2.170.120.12">
    <property type="entry name" value="DNA-directed RNA polymerase, insert domain"/>
    <property type="match status" value="1"/>
</dbReference>
<dbReference type="Gene3D" id="3.30.1360.10">
    <property type="entry name" value="RNA polymerase, RBP11-like subunit"/>
    <property type="match status" value="1"/>
</dbReference>
<dbReference type="HAMAP" id="MF_00320">
    <property type="entry name" value="RNApol_arch_Rpo3"/>
    <property type="match status" value="1"/>
</dbReference>
<dbReference type="InterPro" id="IPR001514">
    <property type="entry name" value="DNA-dir_RNA_pol_30-40kDasu_CS"/>
</dbReference>
<dbReference type="InterPro" id="IPR011262">
    <property type="entry name" value="DNA-dir_RNA_pol_insert"/>
</dbReference>
<dbReference type="InterPro" id="IPR011263">
    <property type="entry name" value="DNA-dir_RNA_pol_RpoA/D/Rpb3"/>
</dbReference>
<dbReference type="InterPro" id="IPR036603">
    <property type="entry name" value="RBP11-like"/>
</dbReference>
<dbReference type="InterPro" id="IPR022842">
    <property type="entry name" value="RNAP_Rpo3/Rpb3/RPAC1"/>
</dbReference>
<dbReference type="InterPro" id="IPR036643">
    <property type="entry name" value="RNApol_insert_sf"/>
</dbReference>
<dbReference type="InterPro" id="IPR050518">
    <property type="entry name" value="Rpo3/RPB3_RNA_Pol_subunit"/>
</dbReference>
<dbReference type="NCBIfam" id="NF001988">
    <property type="entry name" value="PRK00783.1"/>
    <property type="match status" value="1"/>
</dbReference>
<dbReference type="PANTHER" id="PTHR11800">
    <property type="entry name" value="DNA-DIRECTED RNA POLYMERASE"/>
    <property type="match status" value="1"/>
</dbReference>
<dbReference type="PANTHER" id="PTHR11800:SF2">
    <property type="entry name" value="DNA-DIRECTED RNA POLYMERASE II SUBUNIT RPB3"/>
    <property type="match status" value="1"/>
</dbReference>
<dbReference type="Pfam" id="PF01000">
    <property type="entry name" value="RNA_pol_A_bac"/>
    <property type="match status" value="1"/>
</dbReference>
<dbReference type="Pfam" id="PF01193">
    <property type="entry name" value="RNA_pol_L"/>
    <property type="match status" value="1"/>
</dbReference>
<dbReference type="SMART" id="SM00662">
    <property type="entry name" value="RPOLD"/>
    <property type="match status" value="1"/>
</dbReference>
<dbReference type="SUPFAM" id="SSF56553">
    <property type="entry name" value="Insert subdomain of RNA polymerase alpha subunit"/>
    <property type="match status" value="1"/>
</dbReference>
<dbReference type="SUPFAM" id="SSF55257">
    <property type="entry name" value="RBP11-like subunits of RNA polymerase"/>
    <property type="match status" value="1"/>
</dbReference>
<dbReference type="PROSITE" id="PS00446">
    <property type="entry name" value="RNA_POL_D_30KD"/>
    <property type="match status" value="1"/>
</dbReference>
<reference key="1">
    <citation type="journal article" date="2002" name="Proc. Natl. Acad. Sci. U.S.A.">
        <title>Genome sequence of the hyperthermophilic crenarchaeon Pyrobaculum aerophilum.</title>
        <authorList>
            <person name="Fitz-Gibbon S.T."/>
            <person name="Ladner H."/>
            <person name="Kim U.-J."/>
            <person name="Stetter K.O."/>
            <person name="Simon M.I."/>
            <person name="Miller J.H."/>
        </authorList>
    </citation>
    <scope>NUCLEOTIDE SEQUENCE [LARGE SCALE GENOMIC DNA]</scope>
    <source>
        <strain>ATCC 51768 / DSM 7523 / JCM 9630 / CIP 104966 / NBRC 100827 / IM2</strain>
    </source>
</reference>
<protein>
    <recommendedName>
        <fullName evidence="1">DNA-directed RNA polymerase subunit Rpo3</fullName>
        <ecNumber evidence="1">2.7.7.6</ecNumber>
    </recommendedName>
    <alternativeName>
        <fullName evidence="1">DNA-directed RNA polymerase subunit D</fullName>
    </alternativeName>
</protein>